<accession>Q318L1</accession>
<dbReference type="EMBL" id="CP000111">
    <property type="protein sequence ID" value="ABB50684.1"/>
    <property type="molecule type" value="Genomic_DNA"/>
</dbReference>
<dbReference type="RefSeq" id="WP_011377166.1">
    <property type="nucleotide sequence ID" value="NC_007577.1"/>
</dbReference>
<dbReference type="SMR" id="Q318L1"/>
<dbReference type="STRING" id="74546.PMT9312_1624"/>
<dbReference type="KEGG" id="pmi:PMT9312_1624"/>
<dbReference type="eggNOG" id="COG0103">
    <property type="taxonomic scope" value="Bacteria"/>
</dbReference>
<dbReference type="HOGENOM" id="CLU_046483_2_1_3"/>
<dbReference type="OrthoDB" id="9803965at2"/>
<dbReference type="Proteomes" id="UP000002715">
    <property type="component" value="Chromosome"/>
</dbReference>
<dbReference type="GO" id="GO:0022627">
    <property type="term" value="C:cytosolic small ribosomal subunit"/>
    <property type="evidence" value="ECO:0007669"/>
    <property type="project" value="TreeGrafter"/>
</dbReference>
<dbReference type="GO" id="GO:0003723">
    <property type="term" value="F:RNA binding"/>
    <property type="evidence" value="ECO:0007669"/>
    <property type="project" value="TreeGrafter"/>
</dbReference>
<dbReference type="GO" id="GO:0003735">
    <property type="term" value="F:structural constituent of ribosome"/>
    <property type="evidence" value="ECO:0007669"/>
    <property type="project" value="InterPro"/>
</dbReference>
<dbReference type="GO" id="GO:0006412">
    <property type="term" value="P:translation"/>
    <property type="evidence" value="ECO:0007669"/>
    <property type="project" value="UniProtKB-UniRule"/>
</dbReference>
<dbReference type="FunFam" id="3.30.230.10:FF:000001">
    <property type="entry name" value="30S ribosomal protein S9"/>
    <property type="match status" value="1"/>
</dbReference>
<dbReference type="Gene3D" id="3.30.230.10">
    <property type="match status" value="1"/>
</dbReference>
<dbReference type="HAMAP" id="MF_00532_B">
    <property type="entry name" value="Ribosomal_uS9_B"/>
    <property type="match status" value="1"/>
</dbReference>
<dbReference type="InterPro" id="IPR020568">
    <property type="entry name" value="Ribosomal_Su5_D2-typ_SF"/>
</dbReference>
<dbReference type="InterPro" id="IPR000754">
    <property type="entry name" value="Ribosomal_uS9"/>
</dbReference>
<dbReference type="InterPro" id="IPR023035">
    <property type="entry name" value="Ribosomal_uS9_bac/plastid"/>
</dbReference>
<dbReference type="InterPro" id="IPR020574">
    <property type="entry name" value="Ribosomal_uS9_CS"/>
</dbReference>
<dbReference type="InterPro" id="IPR014721">
    <property type="entry name" value="Ribsml_uS5_D2-typ_fold_subgr"/>
</dbReference>
<dbReference type="NCBIfam" id="NF001099">
    <property type="entry name" value="PRK00132.1"/>
    <property type="match status" value="1"/>
</dbReference>
<dbReference type="PANTHER" id="PTHR21569">
    <property type="entry name" value="RIBOSOMAL PROTEIN S9"/>
    <property type="match status" value="1"/>
</dbReference>
<dbReference type="PANTHER" id="PTHR21569:SF1">
    <property type="entry name" value="SMALL RIBOSOMAL SUBUNIT PROTEIN US9M"/>
    <property type="match status" value="1"/>
</dbReference>
<dbReference type="Pfam" id="PF00380">
    <property type="entry name" value="Ribosomal_S9"/>
    <property type="match status" value="1"/>
</dbReference>
<dbReference type="SUPFAM" id="SSF54211">
    <property type="entry name" value="Ribosomal protein S5 domain 2-like"/>
    <property type="match status" value="1"/>
</dbReference>
<dbReference type="PROSITE" id="PS00360">
    <property type="entry name" value="RIBOSOMAL_S9"/>
    <property type="match status" value="1"/>
</dbReference>
<sequence>MNSQIKNKAVYWGTGRRKTSVARVRLIPGNGQIKINGRSGDDYLNFNPLHLNSIKAPLQTLGLENSYDILVNVFGGGLTGQADAIKQGAARALCELSPDNRKPLKTEGHLSRDPRAKERRKYGLKKARKAPQFSKR</sequence>
<protein>
    <recommendedName>
        <fullName evidence="1">Small ribosomal subunit protein uS9</fullName>
    </recommendedName>
    <alternativeName>
        <fullName evidence="3">30S ribosomal protein S9</fullName>
    </alternativeName>
</protein>
<feature type="chain" id="PRO_1000051287" description="Small ribosomal subunit protein uS9">
    <location>
        <begin position="1"/>
        <end position="136"/>
    </location>
</feature>
<feature type="region of interest" description="Disordered" evidence="2">
    <location>
        <begin position="97"/>
        <end position="136"/>
    </location>
</feature>
<feature type="compositionally biased region" description="Basic and acidic residues" evidence="2">
    <location>
        <begin position="98"/>
        <end position="116"/>
    </location>
</feature>
<feature type="compositionally biased region" description="Basic residues" evidence="2">
    <location>
        <begin position="117"/>
        <end position="136"/>
    </location>
</feature>
<comment type="similarity">
    <text evidence="1">Belongs to the universal ribosomal protein uS9 family.</text>
</comment>
<proteinExistence type="inferred from homology"/>
<evidence type="ECO:0000255" key="1">
    <source>
        <dbReference type="HAMAP-Rule" id="MF_00532"/>
    </source>
</evidence>
<evidence type="ECO:0000256" key="2">
    <source>
        <dbReference type="SAM" id="MobiDB-lite"/>
    </source>
</evidence>
<evidence type="ECO:0000305" key="3"/>
<reference key="1">
    <citation type="journal article" date="2006" name="Science">
        <title>Genomic islands and the ecology and evolution of Prochlorococcus.</title>
        <authorList>
            <person name="Coleman M.L."/>
            <person name="Sullivan M.B."/>
            <person name="Martiny A.C."/>
            <person name="Steglich C."/>
            <person name="Barry K."/>
            <person name="Delong E.F."/>
            <person name="Chisholm S.W."/>
        </authorList>
    </citation>
    <scope>NUCLEOTIDE SEQUENCE [LARGE SCALE GENOMIC DNA]</scope>
    <source>
        <strain>MIT 9312</strain>
    </source>
</reference>
<keyword id="KW-0687">Ribonucleoprotein</keyword>
<keyword id="KW-0689">Ribosomal protein</keyword>
<gene>
    <name evidence="1" type="primary">rpsI</name>
    <name evidence="1" type="synonym">rps9</name>
    <name type="ordered locus">PMT9312_1624</name>
</gene>
<organism>
    <name type="scientific">Prochlorococcus marinus (strain MIT 9312)</name>
    <dbReference type="NCBI Taxonomy" id="74546"/>
    <lineage>
        <taxon>Bacteria</taxon>
        <taxon>Bacillati</taxon>
        <taxon>Cyanobacteriota</taxon>
        <taxon>Cyanophyceae</taxon>
        <taxon>Synechococcales</taxon>
        <taxon>Prochlorococcaceae</taxon>
        <taxon>Prochlorococcus</taxon>
    </lineage>
</organism>
<name>RS9_PROM9</name>